<name>SCX25_CENTE</name>
<organism>
    <name type="scientific">Centruroides tecomanus</name>
    <name type="common">Scorpion</name>
    <name type="synonym">Centruroides limpidus tecomanus</name>
    <dbReference type="NCBI Taxonomy" id="1028682"/>
    <lineage>
        <taxon>Eukaryota</taxon>
        <taxon>Metazoa</taxon>
        <taxon>Ecdysozoa</taxon>
        <taxon>Arthropoda</taxon>
        <taxon>Chelicerata</taxon>
        <taxon>Arachnida</taxon>
        <taxon>Scorpiones</taxon>
        <taxon>Buthida</taxon>
        <taxon>Buthoidea</taxon>
        <taxon>Buthidae</taxon>
        <taxon>Centruroides</taxon>
    </lineage>
</organism>
<protein>
    <recommendedName>
        <fullName evidence="5">Beta-toxin Ct25</fullName>
    </recommendedName>
</protein>
<comment type="function">
    <text evidence="1">Beta toxins bind voltage-independently at site-4 of sodium channels (Nav) and shift the voltage of activation toward more negative potentials thereby affecting sodium channel activation and promoting spontaneous and repetitive firing.</text>
</comment>
<comment type="subcellular location">
    <subcellularLocation>
        <location evidence="4">Secreted</location>
    </subcellularLocation>
</comment>
<comment type="tissue specificity">
    <text evidence="7">Expressed by the venom gland.</text>
</comment>
<comment type="domain">
    <text evidence="6">Has the structural arrangement of an alpha-helix connected to antiparallel beta-sheets by disulfide bonds (CS-alpha/beta).</text>
</comment>
<comment type="mass spectrometry">
    <text>Average mass.</text>
</comment>
<comment type="similarity">
    <text evidence="2">Belongs to the long (4 C-C) scorpion toxin superfamily. Sodium channel inhibitor family. Beta subfamily.</text>
</comment>
<sequence>MKVLILIIASVLLIGVECKDGYPKNSEGCKISCVIGNTFCDTECKMLKASSGYCWTLGLACYCEGLPENVEVWDSATNKCGGK</sequence>
<accession>P0DUI3</accession>
<reference key="1">
    <citation type="journal article" date="2013" name="PLoS ONE">
        <title>Mass fingerprinting of the venom and transcriptome of venom gland of scorpion Centruroides tecomanus.</title>
        <authorList>
            <person name="Valdez-Velazquez L.L."/>
            <person name="Quintero-Hernandez V."/>
            <person name="Romero-Gutierrez M.T."/>
            <person name="Coronas F.I."/>
            <person name="Possani L.D."/>
        </authorList>
    </citation>
    <scope>NUCLEOTIDE SEQUENCE [MRNA]</scope>
    <scope>PROTEIN SEQUENCE OF 19-35</scope>
    <scope>PROBABLE AMIDATION AT GLY-81</scope>
    <scope>MASS SPECTROMETRY</scope>
    <scope>SUBCELLULAR LOCATION</scope>
    <source>
        <tissue>Venom</tissue>
        <tissue>Venom gland</tissue>
    </source>
</reference>
<proteinExistence type="evidence at protein level"/>
<evidence type="ECO:0000250" key="1">
    <source>
        <dbReference type="UniProtKB" id="P60266"/>
    </source>
</evidence>
<evidence type="ECO:0000255" key="2"/>
<evidence type="ECO:0000255" key="3">
    <source>
        <dbReference type="PROSITE-ProRule" id="PRU01210"/>
    </source>
</evidence>
<evidence type="ECO:0000269" key="4">
    <source>
    </source>
</evidence>
<evidence type="ECO:0000303" key="5">
    <source>
    </source>
</evidence>
<evidence type="ECO:0000305" key="6"/>
<evidence type="ECO:0000305" key="7">
    <source>
    </source>
</evidence>
<dbReference type="EMBL" id="JZ122289">
    <property type="status" value="NOT_ANNOTATED_CDS"/>
    <property type="molecule type" value="mRNA"/>
</dbReference>
<dbReference type="SMR" id="P0DUI3"/>
<dbReference type="GO" id="GO:0005576">
    <property type="term" value="C:extracellular region"/>
    <property type="evidence" value="ECO:0000314"/>
    <property type="project" value="UniProtKB"/>
</dbReference>
<dbReference type="GO" id="GO:0019871">
    <property type="term" value="F:sodium channel inhibitor activity"/>
    <property type="evidence" value="ECO:0007669"/>
    <property type="project" value="InterPro"/>
</dbReference>
<dbReference type="GO" id="GO:0090729">
    <property type="term" value="F:toxin activity"/>
    <property type="evidence" value="ECO:0007669"/>
    <property type="project" value="UniProtKB-KW"/>
</dbReference>
<dbReference type="GO" id="GO:0006952">
    <property type="term" value="P:defense response"/>
    <property type="evidence" value="ECO:0007669"/>
    <property type="project" value="InterPro"/>
</dbReference>
<dbReference type="CDD" id="cd23106">
    <property type="entry name" value="neurotoxins_LC_scorpion"/>
    <property type="match status" value="1"/>
</dbReference>
<dbReference type="FunFam" id="3.30.30.10:FF:000002">
    <property type="entry name" value="Alpha-like toxin BmK-M1"/>
    <property type="match status" value="1"/>
</dbReference>
<dbReference type="Gene3D" id="3.30.30.10">
    <property type="entry name" value="Knottin, scorpion toxin-like"/>
    <property type="match status" value="1"/>
</dbReference>
<dbReference type="InterPro" id="IPR044062">
    <property type="entry name" value="LCN-type_CS_alpha_beta_dom"/>
</dbReference>
<dbReference type="InterPro" id="IPR003614">
    <property type="entry name" value="Scorpion_toxin-like"/>
</dbReference>
<dbReference type="InterPro" id="IPR036574">
    <property type="entry name" value="Scorpion_toxin-like_sf"/>
</dbReference>
<dbReference type="InterPro" id="IPR018218">
    <property type="entry name" value="Scorpion_toxinL"/>
</dbReference>
<dbReference type="InterPro" id="IPR002061">
    <property type="entry name" value="Scorpion_toxinL/defensin"/>
</dbReference>
<dbReference type="Pfam" id="PF00537">
    <property type="entry name" value="Toxin_3"/>
    <property type="match status" value="1"/>
</dbReference>
<dbReference type="PRINTS" id="PR00285">
    <property type="entry name" value="SCORPNTOXIN"/>
</dbReference>
<dbReference type="SMART" id="SM00505">
    <property type="entry name" value="Knot1"/>
    <property type="match status" value="1"/>
</dbReference>
<dbReference type="SUPFAM" id="SSF57095">
    <property type="entry name" value="Scorpion toxin-like"/>
    <property type="match status" value="1"/>
</dbReference>
<dbReference type="PROSITE" id="PS51863">
    <property type="entry name" value="LCN_CSAB"/>
    <property type="match status" value="1"/>
</dbReference>
<keyword id="KW-0027">Amidation</keyword>
<keyword id="KW-0903">Direct protein sequencing</keyword>
<keyword id="KW-1015">Disulfide bond</keyword>
<keyword id="KW-0872">Ion channel impairing toxin</keyword>
<keyword id="KW-0528">Neurotoxin</keyword>
<keyword id="KW-0964">Secreted</keyword>
<keyword id="KW-0732">Signal</keyword>
<keyword id="KW-0800">Toxin</keyword>
<keyword id="KW-0738">Voltage-gated sodium channel impairing toxin</keyword>
<feature type="signal peptide" evidence="7">
    <location>
        <begin position="1"/>
        <end position="18"/>
    </location>
</feature>
<feature type="chain" id="PRO_0000452430" description="Beta-toxin Ct25" evidence="7">
    <location>
        <begin position="19"/>
        <end position="81"/>
    </location>
</feature>
<feature type="domain" description="LCN-type CS-alpha/beta" evidence="3">
    <location>
        <begin position="19"/>
        <end position="81"/>
    </location>
</feature>
<feature type="modified residue" description="Glycine amide" evidence="7">
    <location>
        <position position="81"/>
    </location>
</feature>
<feature type="disulfide bond" evidence="3">
    <location>
        <begin position="29"/>
        <end position="80"/>
    </location>
</feature>
<feature type="disulfide bond" evidence="3">
    <location>
        <begin position="33"/>
        <end position="54"/>
    </location>
</feature>
<feature type="disulfide bond" evidence="3">
    <location>
        <begin position="40"/>
        <end position="61"/>
    </location>
</feature>
<feature type="disulfide bond" evidence="3">
    <location>
        <begin position="44"/>
        <end position="63"/>
    </location>
</feature>